<protein>
    <recommendedName>
        <fullName>Probable aminopeptidase NPEPL1</fullName>
        <ecNumber>3.4.11.-</ecNumber>
    </recommendedName>
    <alternativeName>
        <fullName>Aminopeptidase-like 1</fullName>
    </alternativeName>
</protein>
<proteinExistence type="inferred from homology"/>
<gene>
    <name type="primary">NPEPL1</name>
</gene>
<evidence type="ECO:0000250" key="1"/>
<evidence type="ECO:0000255" key="2"/>
<evidence type="ECO:0000305" key="3"/>
<comment type="function">
    <text evidence="1">Probably catalyzes the removal of unsubstituted N-terminal amino acids from various peptides.</text>
</comment>
<comment type="cofactor">
    <cofactor evidence="1">
        <name>Zn(2+)</name>
        <dbReference type="ChEBI" id="CHEBI:29105"/>
    </cofactor>
    <cofactor evidence="1">
        <name>Mn(2+)</name>
        <dbReference type="ChEBI" id="CHEBI:29035"/>
    </cofactor>
</comment>
<comment type="similarity">
    <text evidence="3">Belongs to the peptidase M17 family.</text>
</comment>
<comment type="sequence caution" evidence="3">
    <conflict type="erroneous initiation">
        <sequence resource="EMBL-CDS" id="CAH92294"/>
    </conflict>
</comment>
<keyword id="KW-0031">Aminopeptidase</keyword>
<keyword id="KW-0378">Hydrolase</keyword>
<keyword id="KW-0464">Manganese</keyword>
<keyword id="KW-0479">Metal-binding</keyword>
<keyword id="KW-0645">Protease</keyword>
<keyword id="KW-1185">Reference proteome</keyword>
<keyword id="KW-0862">Zinc</keyword>
<accession>Q5R7G6</accession>
<sequence>MANVGLQFQASAGDSDPQSRPLLLLGQLHHLHRVPWSHVRGKLQPRVTEELWQAALSTLNPNPTDSCPLYLNYATVAALPCRVSRHNSPSAAHFITRLVRTCLPPGAHRCIVMVCEQPEVFASACALARAFPLFTHRSGASRRLEKKTVTVEFFLVGQDNGPVEVSTLQCLANATDGVRLAARIVDTPCNEMNTDTFLEEINKVGKELGIIPTIIRDEELKTRGFGGIYGVGKAALHPPALAVLSHTPDGATQTIAWVGKGIVYDTGGLSIKGKTTMPGMKRDCGGAAAVLGAFRAAIKQGFKDNLHAVFCLAENSVGPNATRPDDIHLLYSGKTVEINNTDAEGRLVLADGVSYACKDLGADIILDMATLTGAQGIATGKYHAAVLTNSAEWEAACVKAGRKCGDLVHPLVYCPELHFSEFTSAVADMKNSVADRDNSPSSCAGLFIASHIGFDWPGVWVHLDIAAPVHAGERATGFGVALLLALFGRASEDPLLNLVSPLGCEVDVEEGDVGRDSKRRRLV</sequence>
<name>PEPL1_PONAB</name>
<organism>
    <name type="scientific">Pongo abelii</name>
    <name type="common">Sumatran orangutan</name>
    <name type="synonym">Pongo pygmaeus abelii</name>
    <dbReference type="NCBI Taxonomy" id="9601"/>
    <lineage>
        <taxon>Eukaryota</taxon>
        <taxon>Metazoa</taxon>
        <taxon>Chordata</taxon>
        <taxon>Craniata</taxon>
        <taxon>Vertebrata</taxon>
        <taxon>Euteleostomi</taxon>
        <taxon>Mammalia</taxon>
        <taxon>Eutheria</taxon>
        <taxon>Euarchontoglires</taxon>
        <taxon>Primates</taxon>
        <taxon>Haplorrhini</taxon>
        <taxon>Catarrhini</taxon>
        <taxon>Hominidae</taxon>
        <taxon>Pongo</taxon>
    </lineage>
</organism>
<dbReference type="EC" id="3.4.11.-"/>
<dbReference type="EMBL" id="CR860151">
    <property type="protein sequence ID" value="CAH92294.1"/>
    <property type="status" value="ALT_INIT"/>
    <property type="molecule type" value="Transcribed_RNA"/>
</dbReference>
<dbReference type="RefSeq" id="XP_024094434.1">
    <property type="nucleotide sequence ID" value="XM_024238666.3"/>
</dbReference>
<dbReference type="SMR" id="Q5R7G6"/>
<dbReference type="FunCoup" id="Q5R7G6">
    <property type="interactions" value="1511"/>
</dbReference>
<dbReference type="STRING" id="9601.ENSPPYP00000012484"/>
<dbReference type="MEROPS" id="M17.006"/>
<dbReference type="GeneID" id="100442018"/>
<dbReference type="eggNOG" id="KOG2597">
    <property type="taxonomic scope" value="Eukaryota"/>
</dbReference>
<dbReference type="HOGENOM" id="CLU_013734_3_1_1"/>
<dbReference type="InParanoid" id="Q5R7G6"/>
<dbReference type="OrthoDB" id="412814at2759"/>
<dbReference type="Proteomes" id="UP000001595">
    <property type="component" value="Unplaced"/>
</dbReference>
<dbReference type="GO" id="GO:0005737">
    <property type="term" value="C:cytoplasm"/>
    <property type="evidence" value="ECO:0007669"/>
    <property type="project" value="InterPro"/>
</dbReference>
<dbReference type="GO" id="GO:0030145">
    <property type="term" value="F:manganese ion binding"/>
    <property type="evidence" value="ECO:0007669"/>
    <property type="project" value="InterPro"/>
</dbReference>
<dbReference type="GO" id="GO:0070006">
    <property type="term" value="F:metalloaminopeptidase activity"/>
    <property type="evidence" value="ECO:0007669"/>
    <property type="project" value="InterPro"/>
</dbReference>
<dbReference type="GO" id="GO:0006508">
    <property type="term" value="P:proteolysis"/>
    <property type="evidence" value="ECO:0007669"/>
    <property type="project" value="UniProtKB-KW"/>
</dbReference>
<dbReference type="CDD" id="cd00433">
    <property type="entry name" value="Peptidase_M17"/>
    <property type="match status" value="1"/>
</dbReference>
<dbReference type="FunFam" id="3.40.50.10590:FF:000001">
    <property type="entry name" value="Probable aminopeptidase NPEPL1"/>
    <property type="match status" value="1"/>
</dbReference>
<dbReference type="FunFam" id="3.40.630.10:FF:000035">
    <property type="entry name" value="Probable aminopeptidase NPEPL1"/>
    <property type="match status" value="1"/>
</dbReference>
<dbReference type="Gene3D" id="3.40.630.10">
    <property type="entry name" value="Zn peptidases"/>
    <property type="match status" value="1"/>
</dbReference>
<dbReference type="Gene3D" id="3.40.50.10590">
    <property type="entry name" value="Zn-dependent exopeptidases"/>
    <property type="match status" value="1"/>
</dbReference>
<dbReference type="InterPro" id="IPR011356">
    <property type="entry name" value="Leucine_aapep/pepB"/>
</dbReference>
<dbReference type="InterPro" id="IPR041417">
    <property type="entry name" value="NPEPL1_N"/>
</dbReference>
<dbReference type="InterPro" id="IPR000819">
    <property type="entry name" value="Peptidase_M17_C"/>
</dbReference>
<dbReference type="PANTHER" id="PTHR11963:SF4">
    <property type="entry name" value="AMINOPEPTIDASE NPEPL1-RELATED"/>
    <property type="match status" value="1"/>
</dbReference>
<dbReference type="PANTHER" id="PTHR11963">
    <property type="entry name" value="LEUCINE AMINOPEPTIDASE-RELATED"/>
    <property type="match status" value="1"/>
</dbReference>
<dbReference type="Pfam" id="PF18295">
    <property type="entry name" value="Pdase_M17_N2"/>
    <property type="match status" value="1"/>
</dbReference>
<dbReference type="Pfam" id="PF00883">
    <property type="entry name" value="Peptidase_M17"/>
    <property type="match status" value="1"/>
</dbReference>
<dbReference type="PRINTS" id="PR00481">
    <property type="entry name" value="LAMNOPPTDASE"/>
</dbReference>
<dbReference type="SUPFAM" id="SSF53187">
    <property type="entry name" value="Zn-dependent exopeptidases"/>
    <property type="match status" value="1"/>
</dbReference>
<dbReference type="PROSITE" id="PS00631">
    <property type="entry name" value="CYTOSOL_AP"/>
    <property type="match status" value="1"/>
</dbReference>
<reference key="1">
    <citation type="submission" date="2004-11" db="EMBL/GenBank/DDBJ databases">
        <authorList>
            <consortium name="The German cDNA consortium"/>
        </authorList>
    </citation>
    <scope>NUCLEOTIDE SEQUENCE [LARGE SCALE MRNA]</scope>
    <source>
        <tissue>Kidney</tissue>
    </source>
</reference>
<feature type="chain" id="PRO_0000165830" description="Probable aminopeptidase NPEPL1">
    <location>
        <begin position="1"/>
        <end position="523"/>
    </location>
</feature>
<feature type="active site" evidence="2">
    <location>
        <position position="272"/>
    </location>
</feature>
<feature type="active site" evidence="2">
    <location>
        <position position="346"/>
    </location>
</feature>
<feature type="binding site" evidence="1">
    <location>
        <position position="260"/>
    </location>
    <ligand>
        <name>Zn(2+)</name>
        <dbReference type="ChEBI" id="CHEBI:29105"/>
        <label>2</label>
    </ligand>
</feature>
<feature type="binding site" evidence="1">
    <location>
        <position position="265"/>
    </location>
    <ligand>
        <name>Zn(2+)</name>
        <dbReference type="ChEBI" id="CHEBI:29105"/>
        <label>1</label>
    </ligand>
</feature>
<feature type="binding site" evidence="1">
    <location>
        <position position="265"/>
    </location>
    <ligand>
        <name>Zn(2+)</name>
        <dbReference type="ChEBI" id="CHEBI:29105"/>
        <label>2</label>
    </ligand>
</feature>
<feature type="binding site" evidence="1">
    <location>
        <position position="283"/>
    </location>
    <ligand>
        <name>Zn(2+)</name>
        <dbReference type="ChEBI" id="CHEBI:29105"/>
        <label>2</label>
    </ligand>
</feature>
<feature type="binding site" evidence="1">
    <location>
        <position position="342"/>
    </location>
    <ligand>
        <name>Zn(2+)</name>
        <dbReference type="ChEBI" id="CHEBI:29105"/>
        <label>1</label>
    </ligand>
</feature>
<feature type="binding site" evidence="1">
    <location>
        <position position="344"/>
    </location>
    <ligand>
        <name>Zn(2+)</name>
        <dbReference type="ChEBI" id="CHEBI:29105"/>
        <label>1</label>
    </ligand>
</feature>
<feature type="binding site" evidence="1">
    <location>
        <position position="344"/>
    </location>
    <ligand>
        <name>Zn(2+)</name>
        <dbReference type="ChEBI" id="CHEBI:29105"/>
        <label>2</label>
    </ligand>
</feature>